<organism>
    <name type="scientific">Prochlorococcus marinus (strain SARG / CCMP1375 / SS120)</name>
    <dbReference type="NCBI Taxonomy" id="167539"/>
    <lineage>
        <taxon>Bacteria</taxon>
        <taxon>Bacillati</taxon>
        <taxon>Cyanobacteriota</taxon>
        <taxon>Cyanophyceae</taxon>
        <taxon>Synechococcales</taxon>
        <taxon>Prochlorococcaceae</taxon>
        <taxon>Prochlorococcus</taxon>
    </lineage>
</organism>
<comment type="function">
    <text evidence="1">Catalyzes the interconversion of 2-phosphoglycerate and 3-phosphoglycerate.</text>
</comment>
<comment type="catalytic activity">
    <reaction evidence="1">
        <text>(2R)-2-phosphoglycerate = (2R)-3-phosphoglycerate</text>
        <dbReference type="Rhea" id="RHEA:15901"/>
        <dbReference type="ChEBI" id="CHEBI:58272"/>
        <dbReference type="ChEBI" id="CHEBI:58289"/>
        <dbReference type="EC" id="5.4.2.12"/>
    </reaction>
</comment>
<comment type="cofactor">
    <cofactor evidence="1">
        <name>Mn(2+)</name>
        <dbReference type="ChEBI" id="CHEBI:29035"/>
    </cofactor>
    <text evidence="1">Binds 2 manganese ions per subunit.</text>
</comment>
<comment type="pathway">
    <text evidence="1">Carbohydrate degradation; glycolysis; pyruvate from D-glyceraldehyde 3-phosphate: step 3/5.</text>
</comment>
<comment type="subunit">
    <text evidence="1">Monomer.</text>
</comment>
<comment type="similarity">
    <text evidence="1">Belongs to the BPG-independent phosphoglycerate mutase family.</text>
</comment>
<gene>
    <name evidence="1" type="primary">gpmI</name>
    <name type="ordered locus">Pro_1587</name>
</gene>
<reference key="1">
    <citation type="journal article" date="2003" name="Proc. Natl. Acad. Sci. U.S.A.">
        <title>Genome sequence of the cyanobacterium Prochlorococcus marinus SS120, a nearly minimal oxyphototrophic genome.</title>
        <authorList>
            <person name="Dufresne A."/>
            <person name="Salanoubat M."/>
            <person name="Partensky F."/>
            <person name="Artiguenave F."/>
            <person name="Axmann I.M."/>
            <person name="Barbe V."/>
            <person name="Duprat S."/>
            <person name="Galperin M.Y."/>
            <person name="Koonin E.V."/>
            <person name="Le Gall F."/>
            <person name="Makarova K.S."/>
            <person name="Ostrowski M."/>
            <person name="Oztas S."/>
            <person name="Robert C."/>
            <person name="Rogozin I.B."/>
            <person name="Scanlan D.J."/>
            <person name="Tandeau de Marsac N."/>
            <person name="Weissenbach J."/>
            <person name="Wincker P."/>
            <person name="Wolf Y.I."/>
            <person name="Hess W.R."/>
        </authorList>
    </citation>
    <scope>NUCLEOTIDE SEQUENCE [LARGE SCALE GENOMIC DNA]</scope>
    <source>
        <strain>SARG / CCMP1375 / SS120</strain>
    </source>
</reference>
<evidence type="ECO:0000255" key="1">
    <source>
        <dbReference type="HAMAP-Rule" id="MF_01038"/>
    </source>
</evidence>
<feature type="chain" id="PRO_0000212183" description="2,3-bisphosphoglycerate-independent phosphoglycerate mutase">
    <location>
        <begin position="1"/>
        <end position="540"/>
    </location>
</feature>
<feature type="active site" description="Phosphoserine intermediate" evidence="1">
    <location>
        <position position="74"/>
    </location>
</feature>
<feature type="binding site" evidence="1">
    <location>
        <position position="24"/>
    </location>
    <ligand>
        <name>Mn(2+)</name>
        <dbReference type="ChEBI" id="CHEBI:29035"/>
        <label>2</label>
    </ligand>
</feature>
<feature type="binding site" evidence="1">
    <location>
        <position position="74"/>
    </location>
    <ligand>
        <name>Mn(2+)</name>
        <dbReference type="ChEBI" id="CHEBI:29035"/>
        <label>2</label>
    </ligand>
</feature>
<feature type="binding site" evidence="1">
    <location>
        <position position="135"/>
    </location>
    <ligand>
        <name>substrate</name>
    </ligand>
</feature>
<feature type="binding site" evidence="1">
    <location>
        <begin position="165"/>
        <end position="166"/>
    </location>
    <ligand>
        <name>substrate</name>
    </ligand>
</feature>
<feature type="binding site" evidence="1">
    <location>
        <position position="197"/>
    </location>
    <ligand>
        <name>substrate</name>
    </ligand>
</feature>
<feature type="binding site" evidence="1">
    <location>
        <position position="203"/>
    </location>
    <ligand>
        <name>substrate</name>
    </ligand>
</feature>
<feature type="binding site" evidence="1">
    <location>
        <begin position="268"/>
        <end position="271"/>
    </location>
    <ligand>
        <name>substrate</name>
    </ligand>
</feature>
<feature type="binding site" evidence="1">
    <location>
        <position position="341"/>
    </location>
    <ligand>
        <name>substrate</name>
    </ligand>
</feature>
<feature type="binding site" evidence="1">
    <location>
        <position position="408"/>
    </location>
    <ligand>
        <name>Mn(2+)</name>
        <dbReference type="ChEBI" id="CHEBI:29035"/>
        <label>1</label>
    </ligand>
</feature>
<feature type="binding site" evidence="1">
    <location>
        <position position="412"/>
    </location>
    <ligand>
        <name>Mn(2+)</name>
        <dbReference type="ChEBI" id="CHEBI:29035"/>
        <label>1</label>
    </ligand>
</feature>
<feature type="binding site" evidence="1">
    <location>
        <position position="449"/>
    </location>
    <ligand>
        <name>Mn(2+)</name>
        <dbReference type="ChEBI" id="CHEBI:29035"/>
        <label>2</label>
    </ligand>
</feature>
<feature type="binding site" evidence="1">
    <location>
        <position position="450"/>
    </location>
    <ligand>
        <name>Mn(2+)</name>
        <dbReference type="ChEBI" id="CHEBI:29035"/>
        <label>2</label>
    </ligand>
</feature>
<feature type="binding site" evidence="1">
    <location>
        <position position="467"/>
    </location>
    <ligand>
        <name>Mn(2+)</name>
        <dbReference type="ChEBI" id="CHEBI:29035"/>
        <label>1</label>
    </ligand>
</feature>
<protein>
    <recommendedName>
        <fullName evidence="1">2,3-bisphosphoglycerate-independent phosphoglycerate mutase</fullName>
        <shortName evidence="1">BPG-independent PGAM</shortName>
        <shortName evidence="1">Phosphoglyceromutase</shortName>
        <shortName evidence="1">iPGM</shortName>
        <ecNumber evidence="1">5.4.2.12</ecNumber>
    </recommendedName>
</protein>
<keyword id="KW-0324">Glycolysis</keyword>
<keyword id="KW-0413">Isomerase</keyword>
<keyword id="KW-0464">Manganese</keyword>
<keyword id="KW-0479">Metal-binding</keyword>
<keyword id="KW-1185">Reference proteome</keyword>
<proteinExistence type="inferred from homology"/>
<dbReference type="EC" id="5.4.2.12" evidence="1"/>
<dbReference type="EMBL" id="AE017126">
    <property type="protein sequence ID" value="AAQ00631.1"/>
    <property type="molecule type" value="Genomic_DNA"/>
</dbReference>
<dbReference type="RefSeq" id="NP_875978.1">
    <property type="nucleotide sequence ID" value="NC_005042.1"/>
</dbReference>
<dbReference type="RefSeq" id="WP_011125737.1">
    <property type="nucleotide sequence ID" value="NC_005042.1"/>
</dbReference>
<dbReference type="SMR" id="Q7VA78"/>
<dbReference type="STRING" id="167539.Pro_1587"/>
<dbReference type="EnsemblBacteria" id="AAQ00631">
    <property type="protein sequence ID" value="AAQ00631"/>
    <property type="gene ID" value="Pro_1587"/>
</dbReference>
<dbReference type="KEGG" id="pma:Pro_1587"/>
<dbReference type="PATRIC" id="fig|167539.5.peg.1676"/>
<dbReference type="eggNOG" id="COG0696">
    <property type="taxonomic scope" value="Bacteria"/>
</dbReference>
<dbReference type="HOGENOM" id="CLU_026099_2_0_3"/>
<dbReference type="OrthoDB" id="9800863at2"/>
<dbReference type="UniPathway" id="UPA00109">
    <property type="reaction ID" value="UER00186"/>
</dbReference>
<dbReference type="Proteomes" id="UP000001420">
    <property type="component" value="Chromosome"/>
</dbReference>
<dbReference type="GO" id="GO:0005829">
    <property type="term" value="C:cytosol"/>
    <property type="evidence" value="ECO:0007669"/>
    <property type="project" value="TreeGrafter"/>
</dbReference>
<dbReference type="GO" id="GO:0030145">
    <property type="term" value="F:manganese ion binding"/>
    <property type="evidence" value="ECO:0007669"/>
    <property type="project" value="UniProtKB-UniRule"/>
</dbReference>
<dbReference type="GO" id="GO:0004619">
    <property type="term" value="F:phosphoglycerate mutase activity"/>
    <property type="evidence" value="ECO:0007669"/>
    <property type="project" value="UniProtKB-EC"/>
</dbReference>
<dbReference type="GO" id="GO:0006007">
    <property type="term" value="P:glucose catabolic process"/>
    <property type="evidence" value="ECO:0007669"/>
    <property type="project" value="InterPro"/>
</dbReference>
<dbReference type="GO" id="GO:0006096">
    <property type="term" value="P:glycolytic process"/>
    <property type="evidence" value="ECO:0007669"/>
    <property type="project" value="UniProtKB-UniRule"/>
</dbReference>
<dbReference type="CDD" id="cd16010">
    <property type="entry name" value="iPGM"/>
    <property type="match status" value="1"/>
</dbReference>
<dbReference type="FunFam" id="3.40.1450.10:FF:000002">
    <property type="entry name" value="2,3-bisphosphoglycerate-independent phosphoglycerate mutase"/>
    <property type="match status" value="1"/>
</dbReference>
<dbReference type="Gene3D" id="3.40.720.10">
    <property type="entry name" value="Alkaline Phosphatase, subunit A"/>
    <property type="match status" value="1"/>
</dbReference>
<dbReference type="Gene3D" id="3.40.1450.10">
    <property type="entry name" value="BPG-independent phosphoglycerate mutase, domain B"/>
    <property type="match status" value="1"/>
</dbReference>
<dbReference type="HAMAP" id="MF_01038">
    <property type="entry name" value="GpmI"/>
    <property type="match status" value="1"/>
</dbReference>
<dbReference type="InterPro" id="IPR017850">
    <property type="entry name" value="Alkaline_phosphatase_core_sf"/>
</dbReference>
<dbReference type="InterPro" id="IPR011258">
    <property type="entry name" value="BPG-indep_PGM_N"/>
</dbReference>
<dbReference type="InterPro" id="IPR006124">
    <property type="entry name" value="Metalloenzyme"/>
</dbReference>
<dbReference type="InterPro" id="IPR036646">
    <property type="entry name" value="PGAM_B_sf"/>
</dbReference>
<dbReference type="InterPro" id="IPR005995">
    <property type="entry name" value="Pgm_bpd_ind"/>
</dbReference>
<dbReference type="NCBIfam" id="TIGR01307">
    <property type="entry name" value="pgm_bpd_ind"/>
    <property type="match status" value="1"/>
</dbReference>
<dbReference type="PANTHER" id="PTHR31637">
    <property type="entry name" value="2,3-BISPHOSPHOGLYCERATE-INDEPENDENT PHOSPHOGLYCERATE MUTASE"/>
    <property type="match status" value="1"/>
</dbReference>
<dbReference type="PANTHER" id="PTHR31637:SF0">
    <property type="entry name" value="2,3-BISPHOSPHOGLYCERATE-INDEPENDENT PHOSPHOGLYCERATE MUTASE"/>
    <property type="match status" value="1"/>
</dbReference>
<dbReference type="Pfam" id="PF06415">
    <property type="entry name" value="iPGM_N"/>
    <property type="match status" value="1"/>
</dbReference>
<dbReference type="Pfam" id="PF01676">
    <property type="entry name" value="Metalloenzyme"/>
    <property type="match status" value="1"/>
</dbReference>
<dbReference type="PIRSF" id="PIRSF001492">
    <property type="entry name" value="IPGAM"/>
    <property type="match status" value="1"/>
</dbReference>
<dbReference type="SUPFAM" id="SSF64158">
    <property type="entry name" value="2,3-Bisphosphoglycerate-independent phosphoglycerate mutase, substrate-binding domain"/>
    <property type="match status" value="1"/>
</dbReference>
<dbReference type="SUPFAM" id="SSF53649">
    <property type="entry name" value="Alkaline phosphatase-like"/>
    <property type="match status" value="1"/>
</dbReference>
<accession>Q7VA78</accession>
<name>GPMI_PROMA</name>
<sequence length="540" mass="59545">MPNKSSATSMRSGHIAPVVLTILDGWGHREENINNAINNADTPVMDALWQAYPHTLIEASGADVGLPDNQMGNSEVGHLTIGAGRIIQQELVRISNTIRSKKLDQITNLSNLANKLIETDKTLHLVGLCSDGGVHSHINHLCGLLEWAKNKGIQKVAVHAFTDGRDTPAKSSLQYLKIIKEKFEVLGIGELATLCGRYWSMDRDNRWERIEKAYELLTNPNYPLSELSSDEIITNSYDSSITDEFLEPIRLTPSYLKDGDGLIMFNFRPDRARQLIKSITLPSFSEFKRKYQPQLNVVTLTQYEMDLPVSVVFPPESLDNLLGQVISEHGLLQYRTAETEKYPHVTYFFNGGIEQPLPGEKRHLVPSPRVATYDLSPEMSAEKLTKSCQEAIESGIYSLIVINYANPDMVGHTGIHAATKKAISTVDKCIGKILDSTGKMSGTLLITADHGNAELMKGPDGEPWTAHTTNPVPVILIEGEKRKISGQGNQIRLREGGGLADIAPTLLEVLSLPKPDAMTGSSLIETIQTNSKTNLVQQHV</sequence>